<sequence length="1284" mass="148372">MVLYKNKKKQIINYANSNWGQNEGVEFQETMLQCILEAVIVSKDAKQVLSLLHELKLFENFLWQRVNTEMSLNHINLTCMLLLYKSKYEYITWDLIDENRFQLFFEKVIEVSLSLNLSEVVYMIQFITLCFQFSNIEKLRKLVYQLTNISILNSLDNLDKVKYLLHDSSSLTKAFDSYKEKRPSIVEKFPLHNLLSRWIHSLLIKSISYAQTEKQEAKVTPLLAIINMSLVLLSAFPTRRFAHPVIEDSCFYTALRMSLYYDSNELFKKMTDDLNYVLKFPFDNTRGNEYEKEQKIRNDELVYYHLQLTLFSDFQKELGDLVFCTQTSLQQRQKLEEITSFLSFNSLKSLCSKCYLRTSFPEKYAIKVDFEFLKNVFINTYDRTRLVNDYDEIINFTLKDVLGERSVMDQENSLTNYFLLQNTAIQYLSISFFMRQQSKAYKKLLLRSLYAELLNFSEQYRRLSIKNATKNLTKDNFFSLNNFKVTSVAPPQIGQVLPQFVKCQMGLSRPGPFHSALRDLKNSIKSPFLCLIYISKDMEYKLLHGNALDPLEGVTDFTIATICNDDVGMFQSDMQSDSDNKSINVYLSPFYYHSLAGLGEYRPKQLKFNFALVLSPEANKYWLDLNILVSLLNRAKEFPKWFEDLFLGFGTPDICAFPNAGLNSIYARNLFNTVEQLQSVLPNCHVPSNLSTESLLIKFYTNQNKISADVTASDRHFLLPSNRLYTYNDKQLESILRGSQPGLTMVNGPTRCGKHVLVCKLLEVLQDTSPNDRTVVLSDSNFSMNTLFTLLEKARCFHQGHLLYLSDEGKDETLERYGTLSSWISKLPGLLREIGRLAASIQAPGSHDASPDTALYFRDAYIKRLWEKYLNTVDDKDSVDAYNRFPFHSYFGDKSKRPIETYNKDNFFDYATKLYGELEYMFQQLEEIRPFGLLRYYEDQELYALCQQSRIIGCTWTSLSTRLGTLKEKGFCFNNLIVMNSQNISESSITSILLSNCEPTGFDRLVLLGNQYLTSGNQDINNTSNGSLFKRLRYLKSRIIDLNTQYNVRESISSLCSSIYPLDIKTVDSSPNKRLDYGNSGFAHEVQFINVGAFKGSQETEPVSGYKQNLGEAEYAVALFQYMRMLGYPTNEIVICTLYESQVSLLNEIISVRCSHNSFFGQPAFVGTVEKLPSDKRVNFVIFTTVESKEASDHWNPKTFYKAFSACSYGLYVLCNRDLFRSTRGLEKLWNEIEKTPDKLLLTTGEIYPSSHKIGSSVETFEIENLLHLSNYVVEMTKKRLNTN</sequence>
<comment type="function">
    <text>Involved in mRNA splicing where it associates with cdc5 and the other cwf proteins as part of the spliceosome.</text>
</comment>
<comment type="subunit">
    <text evidence="1">Belongs to the 40S cdc5-associated complex (or cwf complex), a spliceosome sub-complex reminiscent of a late-stage spliceosome composed of the U2, U5 and U6 snRNAs and at least brr2, cdc5, cwf2/prp3, cwf3/syf1, cwf4/syf3, cwf5/ecm2, spp42/cwf6, cwf7/spf27, cwf8, cwf9, cwf10, cwf11, cwf12, prp45/cwf13, cwf14, cwf15, cwf16, cwf17, cwf18, cwf19, cwf20, cwf21, cwf22, cwf23, cwf24, cwf25, cwf26, cyp7/cwf27, cwf28, cwf29/ist3, lea1, msl1, prp5/cwf1, prp10, prp12/sap130, prp17, prp22, sap61, sap62, sap114, sap145, slu7, smb1, smd1, smd3, smf1, smg1 and syf2.</text>
</comment>
<comment type="interaction">
    <interactant intactId="EBI-539118">
        <id>O94508</id>
    </interactant>
    <interactant intactId="EBI-538771">
        <id>P39964</id>
        <label>cdc5</label>
    </interactant>
    <organismsDiffer>false</organismsDiffer>
    <experiments>3</experiments>
</comment>
<comment type="subcellular location">
    <subcellularLocation>
        <location evidence="2">Nucleus</location>
    </subcellularLocation>
</comment>
<comment type="similarity">
    <text evidence="2">Belongs to the CWF11 family.</text>
</comment>
<organism>
    <name type="scientific">Schizosaccharomyces pombe (strain 972 / ATCC 24843)</name>
    <name type="common">Fission yeast</name>
    <dbReference type="NCBI Taxonomy" id="284812"/>
    <lineage>
        <taxon>Eukaryota</taxon>
        <taxon>Fungi</taxon>
        <taxon>Dikarya</taxon>
        <taxon>Ascomycota</taxon>
        <taxon>Taphrinomycotina</taxon>
        <taxon>Schizosaccharomycetes</taxon>
        <taxon>Schizosaccharomycetales</taxon>
        <taxon>Schizosaccharomycetaceae</taxon>
        <taxon>Schizosaccharomyces</taxon>
    </lineage>
</organism>
<dbReference type="EMBL" id="CU329671">
    <property type="protein sequence ID" value="CAA22806.1"/>
    <property type="molecule type" value="Genomic_DNA"/>
</dbReference>
<dbReference type="PIR" id="T40578">
    <property type="entry name" value="T40578"/>
</dbReference>
<dbReference type="RefSeq" id="NP_595360.1">
    <property type="nucleotide sequence ID" value="NM_001021268.2"/>
</dbReference>
<dbReference type="PDB" id="3JB9">
    <property type="method" value="EM"/>
    <property type="resolution" value="3.60 A"/>
    <property type="chains" value="X=1-1284"/>
</dbReference>
<dbReference type="PDB" id="9ESH">
    <property type="method" value="EM"/>
    <property type="resolution" value="3.20 A"/>
    <property type="chains" value="N=1-1284"/>
</dbReference>
<dbReference type="PDB" id="9ESI">
    <property type="method" value="EM"/>
    <property type="resolution" value="3.10 A"/>
    <property type="chains" value="N=1-1284"/>
</dbReference>
<dbReference type="PDBsum" id="3JB9"/>
<dbReference type="PDBsum" id="9ESH"/>
<dbReference type="PDBsum" id="9ESI"/>
<dbReference type="EMDB" id="EMD-19941"/>
<dbReference type="EMDB" id="EMD-19942"/>
<dbReference type="SMR" id="O94508"/>
<dbReference type="BioGRID" id="277639">
    <property type="interactions" value="51"/>
</dbReference>
<dbReference type="FunCoup" id="O94508">
    <property type="interactions" value="835"/>
</dbReference>
<dbReference type="IntAct" id="O94508">
    <property type="interactions" value="7"/>
</dbReference>
<dbReference type="STRING" id="284812.O94508"/>
<dbReference type="PaxDb" id="4896-SPBC646.02.1"/>
<dbReference type="EnsemblFungi" id="SPBC646.02.1">
    <property type="protein sequence ID" value="SPBC646.02.1:pep"/>
    <property type="gene ID" value="SPBC646.02"/>
</dbReference>
<dbReference type="GeneID" id="2541124"/>
<dbReference type="KEGG" id="spo:2541124"/>
<dbReference type="PomBase" id="SPBC646.02">
    <property type="gene designation" value="cwf11"/>
</dbReference>
<dbReference type="VEuPathDB" id="FungiDB:SPBC646.02"/>
<dbReference type="eggNOG" id="KOG1806">
    <property type="taxonomic scope" value="Eukaryota"/>
</dbReference>
<dbReference type="HOGENOM" id="CLU_001195_0_0_1"/>
<dbReference type="InParanoid" id="O94508"/>
<dbReference type="OMA" id="YRVWLDC"/>
<dbReference type="PhylomeDB" id="O94508"/>
<dbReference type="PRO" id="PR:O94508"/>
<dbReference type="Proteomes" id="UP000002485">
    <property type="component" value="Chromosome II"/>
</dbReference>
<dbReference type="GO" id="GO:0071013">
    <property type="term" value="C:catalytic step 2 spliceosome"/>
    <property type="evidence" value="ECO:0000318"/>
    <property type="project" value="GO_Central"/>
</dbReference>
<dbReference type="GO" id="GO:0071014">
    <property type="term" value="C:post-mRNA release spliceosomal complex"/>
    <property type="evidence" value="ECO:0000314"/>
    <property type="project" value="PomBase"/>
</dbReference>
<dbReference type="GO" id="GO:0000974">
    <property type="term" value="C:Prp19 complex"/>
    <property type="evidence" value="ECO:0000314"/>
    <property type="project" value="PomBase"/>
</dbReference>
<dbReference type="GO" id="GO:0005681">
    <property type="term" value="C:spliceosomal complex"/>
    <property type="evidence" value="ECO:0000314"/>
    <property type="project" value="PomBase"/>
</dbReference>
<dbReference type="GO" id="GO:0005684">
    <property type="term" value="C:U2-type spliceosomal complex"/>
    <property type="evidence" value="ECO:0000314"/>
    <property type="project" value="PomBase"/>
</dbReference>
<dbReference type="GO" id="GO:0003729">
    <property type="term" value="F:mRNA binding"/>
    <property type="evidence" value="ECO:0000318"/>
    <property type="project" value="GO_Central"/>
</dbReference>
<dbReference type="GO" id="GO:0045292">
    <property type="term" value="P:mRNA cis splicing, via spliceosome"/>
    <property type="evidence" value="ECO:0000269"/>
    <property type="project" value="PomBase"/>
</dbReference>
<dbReference type="CDD" id="cd17935">
    <property type="entry name" value="EEXXQc_AQR"/>
    <property type="match status" value="1"/>
</dbReference>
<dbReference type="CDD" id="cd18808">
    <property type="entry name" value="SF1_C_Upf1"/>
    <property type="match status" value="1"/>
</dbReference>
<dbReference type="FunFam" id="3.40.50.300:FF:002863">
    <property type="entry name" value="Pre-mRNA-splicing factor cwf11"/>
    <property type="match status" value="1"/>
</dbReference>
<dbReference type="Gene3D" id="3.40.50.300">
    <property type="entry name" value="P-loop containing nucleotide triphosphate hydrolases"/>
    <property type="match status" value="2"/>
</dbReference>
<dbReference type="InterPro" id="IPR032174">
    <property type="entry name" value="Aquarius_N"/>
</dbReference>
<dbReference type="InterPro" id="IPR026300">
    <property type="entry name" value="CWF11_fam"/>
</dbReference>
<dbReference type="InterPro" id="IPR045055">
    <property type="entry name" value="DNA2/NAM7-like"/>
</dbReference>
<dbReference type="InterPro" id="IPR041679">
    <property type="entry name" value="DNA2/NAM7-like_C"/>
</dbReference>
<dbReference type="InterPro" id="IPR027417">
    <property type="entry name" value="P-loop_NTPase"/>
</dbReference>
<dbReference type="InterPro" id="IPR047187">
    <property type="entry name" value="SF1_C_Upf1"/>
</dbReference>
<dbReference type="PANTHER" id="PTHR10887">
    <property type="entry name" value="DNA2/NAM7 HELICASE FAMILY"/>
    <property type="match status" value="1"/>
</dbReference>
<dbReference type="PANTHER" id="PTHR10887:SF5">
    <property type="entry name" value="RNA HELICASE AQUARIUS"/>
    <property type="match status" value="1"/>
</dbReference>
<dbReference type="Pfam" id="PF13087">
    <property type="entry name" value="AAA_12"/>
    <property type="match status" value="1"/>
</dbReference>
<dbReference type="Pfam" id="PF16399">
    <property type="entry name" value="Aquarius_N_1st"/>
    <property type="match status" value="1"/>
</dbReference>
<dbReference type="PIRSF" id="PIRSF038901">
    <property type="entry name" value="AQR_cwf11"/>
    <property type="match status" value="1"/>
</dbReference>
<name>CWF11_SCHPO</name>
<keyword id="KW-0002">3D-structure</keyword>
<keyword id="KW-0507">mRNA processing</keyword>
<keyword id="KW-0508">mRNA splicing</keyword>
<keyword id="KW-0539">Nucleus</keyword>
<keyword id="KW-1185">Reference proteome</keyword>
<feature type="chain" id="PRO_0000079611" description="Pre-mRNA-splicing factor cwf11">
    <location>
        <begin position="1"/>
        <end position="1284"/>
    </location>
</feature>
<feature type="helix" evidence="4">
    <location>
        <begin position="2"/>
        <end position="18"/>
    </location>
</feature>
<feature type="helix" evidence="4">
    <location>
        <begin position="29"/>
        <end position="41"/>
    </location>
</feature>
<feature type="helix" evidence="4">
    <location>
        <begin position="45"/>
        <end position="54"/>
    </location>
</feature>
<feature type="helix" evidence="4">
    <location>
        <begin position="57"/>
        <end position="60"/>
    </location>
</feature>
<feature type="helix" evidence="4">
    <location>
        <begin position="63"/>
        <end position="65"/>
    </location>
</feature>
<feature type="helix" evidence="4">
    <location>
        <begin position="72"/>
        <end position="87"/>
    </location>
</feature>
<feature type="helix" evidence="4">
    <location>
        <begin position="93"/>
        <end position="95"/>
    </location>
</feature>
<feature type="helix" evidence="4">
    <location>
        <begin position="98"/>
        <end position="114"/>
    </location>
</feature>
<feature type="helix" evidence="4">
    <location>
        <begin position="117"/>
        <end position="119"/>
    </location>
</feature>
<feature type="helix" evidence="4">
    <location>
        <begin position="121"/>
        <end position="132"/>
    </location>
</feature>
<feature type="turn" evidence="4">
    <location>
        <begin position="133"/>
        <end position="135"/>
    </location>
</feature>
<feature type="helix" evidence="4">
    <location>
        <begin position="137"/>
        <end position="146"/>
    </location>
</feature>
<feature type="helix" evidence="4">
    <location>
        <begin position="149"/>
        <end position="154"/>
    </location>
</feature>
<feature type="helix" evidence="4">
    <location>
        <begin position="159"/>
        <end position="165"/>
    </location>
</feature>
<feature type="helix" evidence="4">
    <location>
        <begin position="169"/>
        <end position="188"/>
    </location>
</feature>
<feature type="helix" evidence="4">
    <location>
        <begin position="192"/>
        <end position="212"/>
    </location>
</feature>
<feature type="helix" evidence="4">
    <location>
        <begin position="216"/>
        <end position="218"/>
    </location>
</feature>
<feature type="helix" evidence="4">
    <location>
        <begin position="219"/>
        <end position="234"/>
    </location>
</feature>
<feature type="helix" evidence="4">
    <location>
        <begin position="236"/>
        <end position="249"/>
    </location>
</feature>
<feature type="helix" evidence="4">
    <location>
        <begin position="251"/>
        <end position="257"/>
    </location>
</feature>
<feature type="helix" evidence="4">
    <location>
        <begin position="260"/>
        <end position="263"/>
    </location>
</feature>
<feature type="helix" evidence="4">
    <location>
        <begin position="265"/>
        <end position="278"/>
    </location>
</feature>
<feature type="turn" evidence="4">
    <location>
        <begin position="284"/>
        <end position="286"/>
    </location>
</feature>
<feature type="helix" evidence="4">
    <location>
        <begin position="292"/>
        <end position="313"/>
    </location>
</feature>
<feature type="helix" evidence="4">
    <location>
        <begin position="315"/>
        <end position="318"/>
    </location>
</feature>
<feature type="helix" evidence="4">
    <location>
        <begin position="319"/>
        <end position="323"/>
    </location>
</feature>
<feature type="helix" evidence="4">
    <location>
        <begin position="326"/>
        <end position="329"/>
    </location>
</feature>
<feature type="helix" evidence="4">
    <location>
        <begin position="332"/>
        <end position="340"/>
    </location>
</feature>
<feature type="helix" evidence="4">
    <location>
        <begin position="344"/>
        <end position="353"/>
    </location>
</feature>
<feature type="helix" evidence="4">
    <location>
        <begin position="370"/>
        <end position="381"/>
    </location>
</feature>
<feature type="helix" evidence="4">
    <location>
        <begin position="390"/>
        <end position="394"/>
    </location>
</feature>
<feature type="helix" evidence="4">
    <location>
        <begin position="398"/>
        <end position="411"/>
    </location>
</feature>
<feature type="helix" evidence="4">
    <location>
        <begin position="430"/>
        <end position="465"/>
    </location>
</feature>
<feature type="strand" evidence="4">
    <location>
        <begin position="474"/>
        <end position="488"/>
    </location>
</feature>
<feature type="strand" evidence="4">
    <location>
        <begin position="501"/>
        <end position="507"/>
    </location>
</feature>
<feature type="helix" evidence="4">
    <location>
        <begin position="513"/>
        <end position="523"/>
    </location>
</feature>
<feature type="strand" evidence="4">
    <location>
        <begin position="528"/>
        <end position="534"/>
    </location>
</feature>
<feature type="turn" evidence="4">
    <location>
        <begin position="536"/>
        <end position="538"/>
    </location>
</feature>
<feature type="helix" evidence="4">
    <location>
        <begin position="539"/>
        <end position="543"/>
    </location>
</feature>
<feature type="turn" evidence="4">
    <location>
        <begin position="550"/>
        <end position="553"/>
    </location>
</feature>
<feature type="strand" evidence="4">
    <location>
        <begin position="554"/>
        <end position="562"/>
    </location>
</feature>
<feature type="helix" evidence="4">
    <location>
        <begin position="566"/>
        <end position="570"/>
    </location>
</feature>
<feature type="helix" evidence="4">
    <location>
        <begin position="573"/>
        <end position="575"/>
    </location>
</feature>
<feature type="strand" evidence="4">
    <location>
        <begin position="582"/>
        <end position="587"/>
    </location>
</feature>
<feature type="helix" evidence="4">
    <location>
        <begin position="589"/>
        <end position="596"/>
    </location>
</feature>
<feature type="turn" evidence="4">
    <location>
        <begin position="597"/>
        <end position="599"/>
    </location>
</feature>
<feature type="strand" evidence="4">
    <location>
        <begin position="610"/>
        <end position="612"/>
    </location>
</feature>
<feature type="helix" evidence="4">
    <location>
        <begin position="616"/>
        <end position="631"/>
    </location>
</feature>
<feature type="helix" evidence="4">
    <location>
        <begin position="632"/>
        <end position="637"/>
    </location>
</feature>
<feature type="helix" evidence="4">
    <location>
        <begin position="640"/>
        <end position="646"/>
    </location>
</feature>
<feature type="strand" evidence="4">
    <location>
        <begin position="654"/>
        <end position="656"/>
    </location>
</feature>
<feature type="turn" evidence="4">
    <location>
        <begin position="657"/>
        <end position="659"/>
    </location>
</feature>
<feature type="strand" evidence="4">
    <location>
        <begin position="665"/>
        <end position="669"/>
    </location>
</feature>
<feature type="helix" evidence="4">
    <location>
        <begin position="674"/>
        <end position="680"/>
    </location>
</feature>
<feature type="strand" evidence="3">
    <location>
        <begin position="682"/>
        <end position="685"/>
    </location>
</feature>
<feature type="strand" evidence="4">
    <location>
        <begin position="692"/>
        <end position="702"/>
    </location>
</feature>
<feature type="strand" evidence="4">
    <location>
        <begin position="705"/>
        <end position="711"/>
    </location>
</feature>
<feature type="helix" evidence="4">
    <location>
        <begin position="729"/>
        <end position="739"/>
    </location>
</feature>
<feature type="strand" evidence="4">
    <location>
        <begin position="740"/>
        <end position="747"/>
    </location>
</feature>
<feature type="helix" evidence="4">
    <location>
        <begin position="754"/>
        <end position="768"/>
    </location>
</feature>
<feature type="strand" evidence="4">
    <location>
        <begin position="774"/>
        <end position="779"/>
    </location>
</feature>
<feature type="helix" evidence="4">
    <location>
        <begin position="781"/>
        <end position="794"/>
    </location>
</feature>
<feature type="turn" evidence="4">
    <location>
        <begin position="799"/>
        <end position="801"/>
    </location>
</feature>
<feature type="strand" evidence="4">
    <location>
        <begin position="802"/>
        <end position="805"/>
    </location>
</feature>
<feature type="helix" evidence="4">
    <location>
        <begin position="807"/>
        <end position="810"/>
    </location>
</feature>
<feature type="helix" evidence="4">
    <location>
        <begin position="820"/>
        <end position="841"/>
    </location>
</feature>
<feature type="helix" evidence="4">
    <location>
        <begin position="851"/>
        <end position="860"/>
    </location>
</feature>
<feature type="helix" evidence="4">
    <location>
        <begin position="862"/>
        <end position="872"/>
    </location>
</feature>
<feature type="helix" evidence="4">
    <location>
        <begin position="878"/>
        <end position="884"/>
    </location>
</feature>
<feature type="helix" evidence="4">
    <location>
        <begin position="888"/>
        <end position="894"/>
    </location>
</feature>
<feature type="helix" evidence="4">
    <location>
        <begin position="899"/>
        <end position="901"/>
    </location>
</feature>
<feature type="helix" evidence="4">
    <location>
        <begin position="904"/>
        <end position="906"/>
    </location>
</feature>
<feature type="helix" evidence="4">
    <location>
        <begin position="907"/>
        <end position="932"/>
    </location>
</feature>
<feature type="helix" evidence="4">
    <location>
        <begin position="937"/>
        <end position="946"/>
    </location>
</feature>
<feature type="strand" evidence="4">
    <location>
        <begin position="951"/>
        <end position="955"/>
    </location>
</feature>
<feature type="helix" evidence="4">
    <location>
        <begin position="956"/>
        <end position="961"/>
    </location>
</feature>
<feature type="helix" evidence="4">
    <location>
        <begin position="963"/>
        <end position="969"/>
    </location>
</feature>
<feature type="strand" evidence="4">
    <location>
        <begin position="974"/>
        <end position="979"/>
    </location>
</feature>
<feature type="turn" evidence="4">
    <location>
        <begin position="980"/>
        <end position="983"/>
    </location>
</feature>
<feature type="helix" evidence="4">
    <location>
        <begin position="986"/>
        <end position="994"/>
    </location>
</feature>
<feature type="helix" evidence="4">
    <location>
        <begin position="999"/>
        <end position="1001"/>
    </location>
</feature>
<feature type="strand" evidence="4">
    <location>
        <begin position="1004"/>
        <end position="1008"/>
    </location>
</feature>
<feature type="helix" evidence="4">
    <location>
        <begin position="1011"/>
        <end position="1013"/>
    </location>
</feature>
<feature type="helix" evidence="4">
    <location>
        <begin position="1023"/>
        <end position="1025"/>
    </location>
</feature>
<feature type="helix" evidence="4">
    <location>
        <begin position="1028"/>
        <end position="1034"/>
    </location>
</feature>
<feature type="strand" evidence="4">
    <location>
        <begin position="1044"/>
        <end position="1047"/>
    </location>
</feature>
<feature type="helix" evidence="4">
    <location>
        <begin position="1050"/>
        <end position="1059"/>
    </location>
</feature>
<feature type="strand" evidence="4">
    <location>
        <begin position="1060"/>
        <end position="1062"/>
    </location>
</feature>
<feature type="strand" evidence="4">
    <location>
        <begin position="1065"/>
        <end position="1067"/>
    </location>
</feature>
<feature type="helix" evidence="4">
    <location>
        <begin position="1074"/>
        <end position="1076"/>
    </location>
</feature>
<feature type="strand" evidence="4">
    <location>
        <begin position="1085"/>
        <end position="1087"/>
    </location>
</feature>
<feature type="strand" evidence="4">
    <location>
        <begin position="1100"/>
        <end position="1103"/>
    </location>
</feature>
<feature type="strand" evidence="4">
    <location>
        <begin position="1106"/>
        <end position="1108"/>
    </location>
</feature>
<feature type="helix" evidence="4">
    <location>
        <begin position="1110"/>
        <end position="1125"/>
    </location>
</feature>
<feature type="helix" evidence="4">
    <location>
        <begin position="1130"/>
        <end position="1132"/>
    </location>
</feature>
<feature type="strand" evidence="4">
    <location>
        <begin position="1133"/>
        <end position="1138"/>
    </location>
</feature>
<feature type="helix" evidence="4">
    <location>
        <begin position="1140"/>
        <end position="1153"/>
    </location>
</feature>
<feature type="turn" evidence="4">
    <location>
        <begin position="1154"/>
        <end position="1156"/>
    </location>
</feature>
<feature type="turn" evidence="4">
    <location>
        <begin position="1158"/>
        <end position="1160"/>
    </location>
</feature>
<feature type="strand" evidence="4">
    <location>
        <begin position="1164"/>
        <end position="1168"/>
    </location>
</feature>
<feature type="turn" evidence="4">
    <location>
        <begin position="1169"/>
        <end position="1171"/>
    </location>
</feature>
<feature type="strand" evidence="4">
    <location>
        <begin position="1179"/>
        <end position="1184"/>
    </location>
</feature>
<feature type="helix" evidence="4">
    <location>
        <begin position="1197"/>
        <end position="1205"/>
    </location>
</feature>
<feature type="strand" evidence="4">
    <location>
        <begin position="1208"/>
        <end position="1214"/>
    </location>
</feature>
<feature type="helix" evidence="4">
    <location>
        <begin position="1217"/>
        <end position="1222"/>
    </location>
</feature>
<feature type="helix" evidence="4">
    <location>
        <begin position="1227"/>
        <end position="1233"/>
    </location>
</feature>
<feature type="strand" evidence="4">
    <location>
        <begin position="1238"/>
        <end position="1242"/>
    </location>
</feature>
<feature type="strand" evidence="4">
    <location>
        <begin position="1261"/>
        <end position="1263"/>
    </location>
</feature>
<feature type="helix" evidence="4">
    <location>
        <begin position="1266"/>
        <end position="1282"/>
    </location>
</feature>
<accession>O94508</accession>
<evidence type="ECO:0000269" key="1">
    <source>
    </source>
</evidence>
<evidence type="ECO:0000305" key="2"/>
<evidence type="ECO:0007829" key="3">
    <source>
        <dbReference type="PDB" id="9ESH"/>
    </source>
</evidence>
<evidence type="ECO:0007829" key="4">
    <source>
        <dbReference type="PDB" id="9ESI"/>
    </source>
</evidence>
<proteinExistence type="evidence at protein level"/>
<protein>
    <recommendedName>
        <fullName>Pre-mRNA-splicing factor cwf11</fullName>
    </recommendedName>
    <alternativeName>
        <fullName>Complexed with cdc5 protein 11</fullName>
    </alternativeName>
</protein>
<gene>
    <name type="primary">cwf11</name>
    <name type="ORF">SPBC646.02</name>
</gene>
<reference key="1">
    <citation type="journal article" date="2002" name="Nature">
        <title>The genome sequence of Schizosaccharomyces pombe.</title>
        <authorList>
            <person name="Wood V."/>
            <person name="Gwilliam R."/>
            <person name="Rajandream M.A."/>
            <person name="Lyne M.H."/>
            <person name="Lyne R."/>
            <person name="Stewart A."/>
            <person name="Sgouros J.G."/>
            <person name="Peat N."/>
            <person name="Hayles J."/>
            <person name="Baker S.G."/>
            <person name="Basham D."/>
            <person name="Bowman S."/>
            <person name="Brooks K."/>
            <person name="Brown D."/>
            <person name="Brown S."/>
            <person name="Chillingworth T."/>
            <person name="Churcher C.M."/>
            <person name="Collins M."/>
            <person name="Connor R."/>
            <person name="Cronin A."/>
            <person name="Davis P."/>
            <person name="Feltwell T."/>
            <person name="Fraser A."/>
            <person name="Gentles S."/>
            <person name="Goble A."/>
            <person name="Hamlin N."/>
            <person name="Harris D.E."/>
            <person name="Hidalgo J."/>
            <person name="Hodgson G."/>
            <person name="Holroyd S."/>
            <person name="Hornsby T."/>
            <person name="Howarth S."/>
            <person name="Huckle E.J."/>
            <person name="Hunt S."/>
            <person name="Jagels K."/>
            <person name="James K.D."/>
            <person name="Jones L."/>
            <person name="Jones M."/>
            <person name="Leather S."/>
            <person name="McDonald S."/>
            <person name="McLean J."/>
            <person name="Mooney P."/>
            <person name="Moule S."/>
            <person name="Mungall K.L."/>
            <person name="Murphy L.D."/>
            <person name="Niblett D."/>
            <person name="Odell C."/>
            <person name="Oliver K."/>
            <person name="O'Neil S."/>
            <person name="Pearson D."/>
            <person name="Quail M.A."/>
            <person name="Rabbinowitsch E."/>
            <person name="Rutherford K.M."/>
            <person name="Rutter S."/>
            <person name="Saunders D."/>
            <person name="Seeger K."/>
            <person name="Sharp S."/>
            <person name="Skelton J."/>
            <person name="Simmonds M.N."/>
            <person name="Squares R."/>
            <person name="Squares S."/>
            <person name="Stevens K."/>
            <person name="Taylor K."/>
            <person name="Taylor R.G."/>
            <person name="Tivey A."/>
            <person name="Walsh S.V."/>
            <person name="Warren T."/>
            <person name="Whitehead S."/>
            <person name="Woodward J.R."/>
            <person name="Volckaert G."/>
            <person name="Aert R."/>
            <person name="Robben J."/>
            <person name="Grymonprez B."/>
            <person name="Weltjens I."/>
            <person name="Vanstreels E."/>
            <person name="Rieger M."/>
            <person name="Schaefer M."/>
            <person name="Mueller-Auer S."/>
            <person name="Gabel C."/>
            <person name="Fuchs M."/>
            <person name="Duesterhoeft A."/>
            <person name="Fritzc C."/>
            <person name="Holzer E."/>
            <person name="Moestl D."/>
            <person name="Hilbert H."/>
            <person name="Borzym K."/>
            <person name="Langer I."/>
            <person name="Beck A."/>
            <person name="Lehrach H."/>
            <person name="Reinhardt R."/>
            <person name="Pohl T.M."/>
            <person name="Eger P."/>
            <person name="Zimmermann W."/>
            <person name="Wedler H."/>
            <person name="Wambutt R."/>
            <person name="Purnelle B."/>
            <person name="Goffeau A."/>
            <person name="Cadieu E."/>
            <person name="Dreano S."/>
            <person name="Gloux S."/>
            <person name="Lelaure V."/>
            <person name="Mottier S."/>
            <person name="Galibert F."/>
            <person name="Aves S.J."/>
            <person name="Xiang Z."/>
            <person name="Hunt C."/>
            <person name="Moore K."/>
            <person name="Hurst S.M."/>
            <person name="Lucas M."/>
            <person name="Rochet M."/>
            <person name="Gaillardin C."/>
            <person name="Tallada V.A."/>
            <person name="Garzon A."/>
            <person name="Thode G."/>
            <person name="Daga R.R."/>
            <person name="Cruzado L."/>
            <person name="Jimenez J."/>
            <person name="Sanchez M."/>
            <person name="del Rey F."/>
            <person name="Benito J."/>
            <person name="Dominguez A."/>
            <person name="Revuelta J.L."/>
            <person name="Moreno S."/>
            <person name="Armstrong J."/>
            <person name="Forsburg S.L."/>
            <person name="Cerutti L."/>
            <person name="Lowe T."/>
            <person name="McCombie W.R."/>
            <person name="Paulsen I."/>
            <person name="Potashkin J."/>
            <person name="Shpakovski G.V."/>
            <person name="Ussery D."/>
            <person name="Barrell B.G."/>
            <person name="Nurse P."/>
        </authorList>
    </citation>
    <scope>NUCLEOTIDE SEQUENCE [LARGE SCALE GENOMIC DNA]</scope>
    <source>
        <strain>972 / ATCC 24843</strain>
    </source>
</reference>
<reference key="2">
    <citation type="journal article" date="2002" name="Mol. Cell. Biol.">
        <title>Proteomics analysis reveals stable multiprotein complexes in both fission and budding yeasts containing Myb-related Cdc5p/Cef1p, novel pre-mRNA splicing factors, and snRNAs.</title>
        <authorList>
            <person name="Ohi M.D."/>
            <person name="Link A.J."/>
            <person name="Ren L."/>
            <person name="Jennings J.L."/>
            <person name="McDonald W.H."/>
            <person name="Gould K.L."/>
        </authorList>
    </citation>
    <scope>IDENTIFICATION IN THE CWF COMPLEX</scope>
    <scope>IDENTIFICATION BY MASS SPECTROMETRY</scope>
</reference>